<feature type="chain" id="PRO_0000402702" description="Ureidoacrylate amidohydrolase RutB">
    <location>
        <begin position="1"/>
        <end position="244"/>
    </location>
</feature>
<feature type="active site" description="Proton acceptor" evidence="1">
    <location>
        <position position="38"/>
    </location>
</feature>
<feature type="active site" evidence="1">
    <location>
        <position position="147"/>
    </location>
</feature>
<feature type="active site" description="Nucleophile" evidence="1">
    <location>
        <position position="180"/>
    </location>
</feature>
<keyword id="KW-0378">Hydrolase</keyword>
<keyword id="KW-1185">Reference proteome</keyword>
<organism>
    <name type="scientific">Shigella flexneri</name>
    <dbReference type="NCBI Taxonomy" id="623"/>
    <lineage>
        <taxon>Bacteria</taxon>
        <taxon>Pseudomonadati</taxon>
        <taxon>Pseudomonadota</taxon>
        <taxon>Gammaproteobacteria</taxon>
        <taxon>Enterobacterales</taxon>
        <taxon>Enterobacteriaceae</taxon>
        <taxon>Shigella</taxon>
    </lineage>
</organism>
<reference key="1">
    <citation type="journal article" date="2002" name="Nucleic Acids Res.">
        <title>Genome sequence of Shigella flexneri 2a: insights into pathogenicity through comparison with genomes of Escherichia coli K12 and O157.</title>
        <authorList>
            <person name="Jin Q."/>
            <person name="Yuan Z."/>
            <person name="Xu J."/>
            <person name="Wang Y."/>
            <person name="Shen Y."/>
            <person name="Lu W."/>
            <person name="Wang J."/>
            <person name="Liu H."/>
            <person name="Yang J."/>
            <person name="Yang F."/>
            <person name="Zhang X."/>
            <person name="Zhang J."/>
            <person name="Yang G."/>
            <person name="Wu H."/>
            <person name="Qu D."/>
            <person name="Dong J."/>
            <person name="Sun L."/>
            <person name="Xue Y."/>
            <person name="Zhao A."/>
            <person name="Gao Y."/>
            <person name="Zhu J."/>
            <person name="Kan B."/>
            <person name="Ding K."/>
            <person name="Chen S."/>
            <person name="Cheng H."/>
            <person name="Yao Z."/>
            <person name="He B."/>
            <person name="Chen R."/>
            <person name="Ma D."/>
            <person name="Qiang B."/>
            <person name="Wen Y."/>
            <person name="Hou Y."/>
            <person name="Yu J."/>
        </authorList>
    </citation>
    <scope>NUCLEOTIDE SEQUENCE [LARGE SCALE GENOMIC DNA]</scope>
    <source>
        <strain>301 / Serotype 2a</strain>
    </source>
</reference>
<reference key="2">
    <citation type="journal article" date="2003" name="Infect. Immun.">
        <title>Complete genome sequence and comparative genomics of Shigella flexneri serotype 2a strain 2457T.</title>
        <authorList>
            <person name="Wei J."/>
            <person name="Goldberg M.B."/>
            <person name="Burland V."/>
            <person name="Venkatesan M.M."/>
            <person name="Deng W."/>
            <person name="Fournier G."/>
            <person name="Mayhew G.F."/>
            <person name="Plunkett G. III"/>
            <person name="Rose D.J."/>
            <person name="Darling A."/>
            <person name="Mau B."/>
            <person name="Perna N.T."/>
            <person name="Payne S.M."/>
            <person name="Runyen-Janecky L.J."/>
            <person name="Zhou S."/>
            <person name="Schwartz D.C."/>
            <person name="Blattner F.R."/>
        </authorList>
    </citation>
    <scope>NUCLEOTIDE SEQUENCE [LARGE SCALE GENOMIC DNA]</scope>
    <source>
        <strain>ATCC 700930 / 2457T / Serotype 2a</strain>
    </source>
</reference>
<name>RUTB_SHIFL</name>
<proteinExistence type="inferred from homology"/>
<protein>
    <recommendedName>
        <fullName evidence="1">Ureidoacrylate amidohydrolase RutB</fullName>
        <ecNumber evidence="1">3.5.1.110</ecNumber>
    </recommendedName>
</protein>
<gene>
    <name evidence="1" type="primary">rutB</name>
    <name type="ordered locus">SF1014</name>
    <name type="ordered locus">S1084</name>
</gene>
<sequence length="244" mass="26578">MPRPSLCADSGGGMMTTLTARPEAITFDPQQSAQIVVDMQNAYATPGGYLDLAGFDVSTTRPVIANIQTAVTAARAAGMLIIWFQNGWDEQYVEAGGPGSPNFHKSNALKTMRKQPQLQGKLLAKGSWDYQLVDELVPQPGDIVLPKPRYSGFFNTPLDSILRSRGIRHLVFTGIATNVCVESTLRDGFFLEHFGVVLEDATHQAGPEFAQKAALFNIETFFGWVSDVETFCDALSPTSFARIA</sequence>
<accession>Q83RV3</accession>
<accession>Q7C249</accession>
<evidence type="ECO:0000255" key="1">
    <source>
        <dbReference type="HAMAP-Rule" id="MF_00830"/>
    </source>
</evidence>
<dbReference type="EC" id="3.5.1.110" evidence="1"/>
<dbReference type="EMBL" id="AE005674">
    <property type="protein sequence ID" value="AAN42640.1"/>
    <property type="molecule type" value="Genomic_DNA"/>
</dbReference>
<dbReference type="EMBL" id="AE014073">
    <property type="protein sequence ID" value="AAP16525.1"/>
    <property type="molecule type" value="Genomic_DNA"/>
</dbReference>
<dbReference type="RefSeq" id="NP_706933.1">
    <property type="nucleotide sequence ID" value="NC_004337.2"/>
</dbReference>
<dbReference type="SMR" id="Q83RV3"/>
<dbReference type="STRING" id="198214.SF1014"/>
<dbReference type="PaxDb" id="198214-SF1014"/>
<dbReference type="GeneID" id="1023952"/>
<dbReference type="KEGG" id="sfl:SF1014"/>
<dbReference type="KEGG" id="sfx:S1084"/>
<dbReference type="PATRIC" id="fig|198214.7.peg.1178"/>
<dbReference type="HOGENOM" id="CLU_068979_8_0_6"/>
<dbReference type="Proteomes" id="UP000001006">
    <property type="component" value="Chromosome"/>
</dbReference>
<dbReference type="Proteomes" id="UP000002673">
    <property type="component" value="Chromosome"/>
</dbReference>
<dbReference type="GO" id="GO:0016811">
    <property type="term" value="F:hydrolase activity, acting on carbon-nitrogen (but not peptide) bonds, in linear amides"/>
    <property type="evidence" value="ECO:0007669"/>
    <property type="project" value="UniProtKB-UniRule"/>
</dbReference>
<dbReference type="GO" id="GO:0019740">
    <property type="term" value="P:nitrogen utilization"/>
    <property type="evidence" value="ECO:0007669"/>
    <property type="project" value="UniProtKB-UniRule"/>
</dbReference>
<dbReference type="GO" id="GO:0006212">
    <property type="term" value="P:uracil catabolic process"/>
    <property type="evidence" value="ECO:0007669"/>
    <property type="project" value="UniProtKB-UniRule"/>
</dbReference>
<dbReference type="CDD" id="cd00431">
    <property type="entry name" value="cysteine_hydrolases"/>
    <property type="match status" value="1"/>
</dbReference>
<dbReference type="FunFam" id="3.40.50.850:FF:000004">
    <property type="entry name" value="Peroxyureidoacrylate/ureidoacrylate amidohydrolase RutB"/>
    <property type="match status" value="1"/>
</dbReference>
<dbReference type="Gene3D" id="3.40.50.850">
    <property type="entry name" value="Isochorismatase-like"/>
    <property type="match status" value="1"/>
</dbReference>
<dbReference type="HAMAP" id="MF_00830">
    <property type="entry name" value="RutB"/>
    <property type="match status" value="1"/>
</dbReference>
<dbReference type="InterPro" id="IPR000868">
    <property type="entry name" value="Isochorismatase-like_dom"/>
</dbReference>
<dbReference type="InterPro" id="IPR050272">
    <property type="entry name" value="Isochorismatase-like_hydrls"/>
</dbReference>
<dbReference type="InterPro" id="IPR036380">
    <property type="entry name" value="Isochorismatase-like_sf"/>
</dbReference>
<dbReference type="InterPro" id="IPR019916">
    <property type="entry name" value="RutB"/>
</dbReference>
<dbReference type="NCBIfam" id="TIGR03614">
    <property type="entry name" value="RutB"/>
    <property type="match status" value="1"/>
</dbReference>
<dbReference type="PANTHER" id="PTHR43540:SF6">
    <property type="entry name" value="ISOCHORISMATASE-LIKE DOMAIN-CONTAINING PROTEIN"/>
    <property type="match status" value="1"/>
</dbReference>
<dbReference type="PANTHER" id="PTHR43540">
    <property type="entry name" value="PEROXYUREIDOACRYLATE/UREIDOACRYLATE AMIDOHYDROLASE-RELATED"/>
    <property type="match status" value="1"/>
</dbReference>
<dbReference type="Pfam" id="PF00857">
    <property type="entry name" value="Isochorismatase"/>
    <property type="match status" value="1"/>
</dbReference>
<dbReference type="SUPFAM" id="SSF52499">
    <property type="entry name" value="Isochorismatase-like hydrolases"/>
    <property type="match status" value="1"/>
</dbReference>
<comment type="function">
    <text evidence="1">Hydrolyzes ureidoacrylate to form aminoacrylate and carbamate. The carbamate hydrolyzes spontaneously, thereby releasing one of the nitrogen atoms of the pyrimidine ring as ammonia and one of its carbon atoms as CO2.</text>
</comment>
<comment type="catalytic activity">
    <reaction evidence="1">
        <text>(Z)-3-ureidoacrylate + H2O + H(+) = (Z)-3-aminoacrylate + NH4(+) + CO2</text>
        <dbReference type="Rhea" id="RHEA:42624"/>
        <dbReference type="ChEBI" id="CHEBI:15377"/>
        <dbReference type="ChEBI" id="CHEBI:15378"/>
        <dbReference type="ChEBI" id="CHEBI:16526"/>
        <dbReference type="ChEBI" id="CHEBI:28938"/>
        <dbReference type="ChEBI" id="CHEBI:59891"/>
        <dbReference type="ChEBI" id="CHEBI:59894"/>
        <dbReference type="EC" id="3.5.1.110"/>
    </reaction>
</comment>
<comment type="catalytic activity">
    <reaction evidence="1">
        <text>(Z)-3-ureidoacrylate + H2O = (Z)-3-aminoacrylate + carbamate + H(+)</text>
        <dbReference type="Rhea" id="RHEA:31603"/>
        <dbReference type="ChEBI" id="CHEBI:13941"/>
        <dbReference type="ChEBI" id="CHEBI:15377"/>
        <dbReference type="ChEBI" id="CHEBI:15378"/>
        <dbReference type="ChEBI" id="CHEBI:59891"/>
        <dbReference type="ChEBI" id="CHEBI:59894"/>
    </reaction>
</comment>
<comment type="catalytic activity">
    <reaction evidence="1">
        <text>(Z)-2-methylureidoacrylate + H2O + H(+) = (Z)-2-methylaminoacrylate + NH4(+) + CO2</text>
        <dbReference type="Rhea" id="RHEA:42620"/>
        <dbReference type="ChEBI" id="CHEBI:15377"/>
        <dbReference type="ChEBI" id="CHEBI:15378"/>
        <dbReference type="ChEBI" id="CHEBI:16526"/>
        <dbReference type="ChEBI" id="CHEBI:28938"/>
        <dbReference type="ChEBI" id="CHEBI:143783"/>
        <dbReference type="ChEBI" id="CHEBI:145735"/>
        <dbReference type="EC" id="3.5.1.110"/>
    </reaction>
</comment>
<comment type="induction">
    <text evidence="1">Up-regulated by the nitrogen regulatory protein C (NtrC also called GlnG) and repressed by RutR.</text>
</comment>
<comment type="similarity">
    <text evidence="1">Belongs to the isochorismatase family. RutB subfamily.</text>
</comment>